<gene>
    <name type="primary">CCKBR</name>
</gene>
<dbReference type="EMBL" id="D12817">
    <property type="protein sequence ID" value="BAA02250.1"/>
    <property type="molecule type" value="mRNA"/>
</dbReference>
<dbReference type="PIR" id="JQ1614">
    <property type="entry name" value="JQ1614"/>
</dbReference>
<dbReference type="SMR" id="P30796"/>
<dbReference type="GlyCosmos" id="P30796">
    <property type="glycosylation" value="3 sites, No reported glycans"/>
</dbReference>
<dbReference type="GO" id="GO:0005886">
    <property type="term" value="C:plasma membrane"/>
    <property type="evidence" value="ECO:0007669"/>
    <property type="project" value="UniProtKB-SubCell"/>
</dbReference>
<dbReference type="GO" id="GO:0015054">
    <property type="term" value="F:gastrin receptor activity"/>
    <property type="evidence" value="ECO:0000250"/>
    <property type="project" value="UniProtKB"/>
</dbReference>
<dbReference type="GO" id="GO:0008188">
    <property type="term" value="F:neuropeptide receptor activity"/>
    <property type="evidence" value="ECO:0007669"/>
    <property type="project" value="TreeGrafter"/>
</dbReference>
<dbReference type="GO" id="GO:0008284">
    <property type="term" value="P:positive regulation of cell population proliferation"/>
    <property type="evidence" value="ECO:0000250"/>
    <property type="project" value="UniProtKB"/>
</dbReference>
<dbReference type="GO" id="GO:0007204">
    <property type="term" value="P:positive regulation of cytosolic calcium ion concentration"/>
    <property type="evidence" value="ECO:0000250"/>
    <property type="project" value="UniProtKB"/>
</dbReference>
<dbReference type="Gene3D" id="1.20.1070.10">
    <property type="entry name" value="Rhodopsin 7-helix transmembrane proteins"/>
    <property type="match status" value="1"/>
</dbReference>
<dbReference type="InterPro" id="IPR009126">
    <property type="entry name" value="Cholcskin_rcpt"/>
</dbReference>
<dbReference type="InterPro" id="IPR000314">
    <property type="entry name" value="Gastrin_rcpt"/>
</dbReference>
<dbReference type="InterPro" id="IPR000276">
    <property type="entry name" value="GPCR_Rhodpsn"/>
</dbReference>
<dbReference type="InterPro" id="IPR017452">
    <property type="entry name" value="GPCR_Rhodpsn_7TM"/>
</dbReference>
<dbReference type="PANTHER" id="PTHR24243">
    <property type="entry name" value="G-PROTEIN COUPLED RECEPTOR"/>
    <property type="match status" value="1"/>
</dbReference>
<dbReference type="PANTHER" id="PTHR24243:SF45">
    <property type="entry name" value="GASTRIN_CHOLECYSTOKININ TYPE B RECEPTOR"/>
    <property type="match status" value="1"/>
</dbReference>
<dbReference type="Pfam" id="PF00001">
    <property type="entry name" value="7tm_1"/>
    <property type="match status" value="1"/>
</dbReference>
<dbReference type="PRINTS" id="PR01822">
    <property type="entry name" value="CCYSTOKININR"/>
</dbReference>
<dbReference type="PRINTS" id="PR00527">
    <property type="entry name" value="GASTRINR"/>
</dbReference>
<dbReference type="PRINTS" id="PR00237">
    <property type="entry name" value="GPCRRHODOPSN"/>
</dbReference>
<dbReference type="SUPFAM" id="SSF81321">
    <property type="entry name" value="Family A G protein-coupled receptor-like"/>
    <property type="match status" value="1"/>
</dbReference>
<dbReference type="PROSITE" id="PS00237">
    <property type="entry name" value="G_PROTEIN_RECEP_F1_1"/>
    <property type="match status" value="1"/>
</dbReference>
<dbReference type="PROSITE" id="PS50262">
    <property type="entry name" value="G_PROTEIN_RECEP_F1_2"/>
    <property type="match status" value="1"/>
</dbReference>
<proteinExistence type="evidence at transcript level"/>
<reference key="1">
    <citation type="journal article" date="1992" name="Biochem. Biophys. Res. Commun.">
        <title>Cloning and characterization of gastrin receptor from ECL carcinoid tumor of Mastomys natalensis.</title>
        <authorList>
            <person name="Nakata H."/>
            <person name="Matsui T."/>
            <person name="Ito M."/>
            <person name="Taniguchi T."/>
            <person name="Naribayashi Y."/>
            <person name="Arima N."/>
            <person name="Nakamura A."/>
            <person name="Kinoshita Y."/>
            <person name="Chihara K."/>
            <person name="Hosoda S."/>
            <person name="Chiba T."/>
        </authorList>
    </citation>
    <scope>NUCLEOTIDE SEQUENCE [MRNA]</scope>
</reference>
<name>GASR_MASNA</name>
<feature type="chain" id="PRO_0000069476" description="Gastrin/cholecystokinin type B receptor">
    <location>
        <begin position="1"/>
        <end position="450"/>
    </location>
</feature>
<feature type="topological domain" description="Extracellular" evidence="2">
    <location>
        <begin position="1"/>
        <end position="57"/>
    </location>
</feature>
<feature type="transmembrane region" description="Helical; Name=1" evidence="2">
    <location>
        <begin position="58"/>
        <end position="79"/>
    </location>
</feature>
<feature type="topological domain" description="Cytoplasmic" evidence="2">
    <location>
        <begin position="80"/>
        <end position="87"/>
    </location>
</feature>
<feature type="transmembrane region" description="Helical; Name=2" evidence="2">
    <location>
        <begin position="88"/>
        <end position="109"/>
    </location>
</feature>
<feature type="topological domain" description="Extracellular" evidence="2">
    <location>
        <begin position="110"/>
        <end position="131"/>
    </location>
</feature>
<feature type="transmembrane region" description="Helical; Name=3" evidence="2">
    <location>
        <begin position="132"/>
        <end position="150"/>
    </location>
</feature>
<feature type="topological domain" description="Cytoplasmic" evidence="2">
    <location>
        <begin position="151"/>
        <end position="170"/>
    </location>
</feature>
<feature type="transmembrane region" description="Helical; Name=4" evidence="2">
    <location>
        <begin position="171"/>
        <end position="189"/>
    </location>
</feature>
<feature type="topological domain" description="Extracellular" evidence="2">
    <location>
        <begin position="190"/>
        <end position="219"/>
    </location>
</feature>
<feature type="transmembrane region" description="Helical; Name=5" evidence="2">
    <location>
        <begin position="220"/>
        <end position="242"/>
    </location>
</feature>
<feature type="topological domain" description="Cytoplasmic" evidence="2">
    <location>
        <begin position="243"/>
        <end position="336"/>
    </location>
</feature>
<feature type="transmembrane region" description="Helical; Name=6" evidence="2">
    <location>
        <begin position="337"/>
        <end position="358"/>
    </location>
</feature>
<feature type="topological domain" description="Extracellular" evidence="2">
    <location>
        <begin position="359"/>
        <end position="376"/>
    </location>
</feature>
<feature type="transmembrane region" description="Helical; Name=7" evidence="2">
    <location>
        <begin position="377"/>
        <end position="397"/>
    </location>
</feature>
<feature type="topological domain" description="Cytoplasmic" evidence="2">
    <location>
        <begin position="398"/>
        <end position="450"/>
    </location>
</feature>
<feature type="region of interest" description="Disordered" evidence="4">
    <location>
        <begin position="258"/>
        <end position="277"/>
    </location>
</feature>
<feature type="lipid moiety-binding region" description="S-palmitoyl cysteine" evidence="1">
    <location>
        <position position="411"/>
    </location>
</feature>
<feature type="glycosylation site" description="N-linked (GlcNAc...) asparagine" evidence="2">
    <location>
        <position position="7"/>
    </location>
</feature>
<feature type="glycosylation site" description="N-linked (GlcNAc...) asparagine" evidence="2">
    <location>
        <position position="30"/>
    </location>
</feature>
<feature type="glycosylation site" description="N-linked (GlcNAc...) asparagine" evidence="2">
    <location>
        <position position="36"/>
    </location>
</feature>
<feature type="disulfide bond" evidence="3">
    <location>
        <begin position="127"/>
        <end position="205"/>
    </location>
</feature>
<sequence>MELLKLNSSVQGPGPGSGSSLCHPGVSLLNSSSAGNLSCEPPRIRGTGTRELELAIRITLYAVIFLMSIGGNMLIIVVLGLSRRLRTVTNAFLLSLAVSDLLLAVACMPFTLLPNLMGTFIFGTVICKAVSYLMGVSVSVSTLNLVAIALERYSAICRPLQARVWQTRSHAARVILATWLLSGLLMVPYPVYTVVQPVGPRVLQCMHRWPSARVRQTWSVLLLMLLFFIPGVVMAVAYGLISRELYLGLRFDGDNDSDTQSRVRNQGGLPGGTAPGPVHQNGGCRHVTVAGEDNDGCYVQLPRSRLEMTTLTTPTPGPGLASANQAKLLAKKRVVRMLLVIVLLFFLCWLPIYSANTWCAFDGPGAHRALSGAPISFIHLLSYASACVNPLVYCFMHRRFRQACLDTCARCCPRPPRARPRPLPDEDPPTPSIASLSRLSYTTISTLGPG</sequence>
<protein>
    <recommendedName>
        <fullName>Gastrin/cholecystokinin type B receptor</fullName>
        <shortName>CCK-B receptor</shortName>
        <shortName>CCK-BR</shortName>
    </recommendedName>
    <alternativeName>
        <fullName>Cholecystokinin-2 receptor</fullName>
        <shortName>CCK2-R</shortName>
    </alternativeName>
</protein>
<organism>
    <name type="scientific">Mastomys natalensis</name>
    <name type="common">African soft-furred rat</name>
    <name type="synonym">Praomys natalensis</name>
    <dbReference type="NCBI Taxonomy" id="10112"/>
    <lineage>
        <taxon>Eukaryota</taxon>
        <taxon>Metazoa</taxon>
        <taxon>Chordata</taxon>
        <taxon>Craniata</taxon>
        <taxon>Vertebrata</taxon>
        <taxon>Euteleostomi</taxon>
        <taxon>Mammalia</taxon>
        <taxon>Eutheria</taxon>
        <taxon>Euarchontoglires</taxon>
        <taxon>Glires</taxon>
        <taxon>Rodentia</taxon>
        <taxon>Myomorpha</taxon>
        <taxon>Muroidea</taxon>
        <taxon>Muridae</taxon>
        <taxon>Murinae</taxon>
        <taxon>Mastomys</taxon>
    </lineage>
</organism>
<comment type="function">
    <text>Receptor for gastrin and cholecystokinin. The CCK-B receptors occur throughout the central nervous system where they modulate anxiety, analgesia, arousal, and neuroleptic activity. This receptor mediates its action by association with G proteins that activate a phosphatidylinositol-calcium second messenger system.</text>
</comment>
<comment type="subcellular location">
    <subcellularLocation>
        <location>Cell membrane</location>
        <topology>Multi-pass membrane protein</topology>
    </subcellularLocation>
</comment>
<comment type="tissue specificity">
    <text>Stomach and brain.</text>
</comment>
<comment type="similarity">
    <text evidence="3">Belongs to the G-protein coupled receptor 1 family.</text>
</comment>
<accession>P30796</accession>
<keyword id="KW-1003">Cell membrane</keyword>
<keyword id="KW-1015">Disulfide bond</keyword>
<keyword id="KW-0297">G-protein coupled receptor</keyword>
<keyword id="KW-0325">Glycoprotein</keyword>
<keyword id="KW-0449">Lipoprotein</keyword>
<keyword id="KW-0472">Membrane</keyword>
<keyword id="KW-0564">Palmitate</keyword>
<keyword id="KW-0675">Receptor</keyword>
<keyword id="KW-0807">Transducer</keyword>
<keyword id="KW-0812">Transmembrane</keyword>
<keyword id="KW-1133">Transmembrane helix</keyword>
<evidence type="ECO:0000250" key="1">
    <source>
        <dbReference type="UniProtKB" id="P17124"/>
    </source>
</evidence>
<evidence type="ECO:0000255" key="2"/>
<evidence type="ECO:0000255" key="3">
    <source>
        <dbReference type="PROSITE-ProRule" id="PRU00521"/>
    </source>
</evidence>
<evidence type="ECO:0000256" key="4">
    <source>
        <dbReference type="SAM" id="MobiDB-lite"/>
    </source>
</evidence>